<proteinExistence type="inferred from homology"/>
<protein>
    <recommendedName>
        <fullName evidence="1">Large ribosomal subunit protein uL14</fullName>
    </recommendedName>
    <alternativeName>
        <fullName evidence="2">50S ribosomal protein L14</fullName>
    </alternativeName>
</protein>
<reference key="1">
    <citation type="journal article" date="2007" name="PLoS ONE">
        <title>Genome sequencing shows that European isolates of Francisella tularensis subspecies tularensis are almost identical to US laboratory strain Schu S4.</title>
        <authorList>
            <person name="Chaudhuri R.R."/>
            <person name="Ren C.-P."/>
            <person name="Desmond L."/>
            <person name="Vincent G.A."/>
            <person name="Silman N.J."/>
            <person name="Brehm J.K."/>
            <person name="Elmore M.J."/>
            <person name="Hudson M.J."/>
            <person name="Forsman M."/>
            <person name="Isherwood K.E."/>
            <person name="Gurycova D."/>
            <person name="Minton N.P."/>
            <person name="Titball R.W."/>
            <person name="Pallen M.J."/>
            <person name="Vipond R."/>
        </authorList>
    </citation>
    <scope>NUCLEOTIDE SEQUENCE [LARGE SCALE GENOMIC DNA]</scope>
    <source>
        <strain>FSC 198</strain>
    </source>
</reference>
<organism>
    <name type="scientific">Francisella tularensis subsp. tularensis (strain FSC 198)</name>
    <dbReference type="NCBI Taxonomy" id="393115"/>
    <lineage>
        <taxon>Bacteria</taxon>
        <taxon>Pseudomonadati</taxon>
        <taxon>Pseudomonadota</taxon>
        <taxon>Gammaproteobacteria</taxon>
        <taxon>Thiotrichales</taxon>
        <taxon>Francisellaceae</taxon>
        <taxon>Francisella</taxon>
    </lineage>
</organism>
<accession>Q14JB0</accession>
<comment type="function">
    <text evidence="1">Binds to 23S rRNA. Forms part of two intersubunit bridges in the 70S ribosome.</text>
</comment>
<comment type="subunit">
    <text evidence="1">Part of the 50S ribosomal subunit. Forms a cluster with proteins L3 and L19. In the 70S ribosome, L14 and L19 interact and together make contacts with the 16S rRNA in bridges B5 and B8.</text>
</comment>
<comment type="similarity">
    <text evidence="1">Belongs to the universal ribosomal protein uL14 family.</text>
</comment>
<feature type="chain" id="PRO_0000266486" description="Large ribosomal subunit protein uL14">
    <location>
        <begin position="1"/>
        <end position="122"/>
    </location>
</feature>
<gene>
    <name evidence="1" type="primary">rplN</name>
    <name type="ordered locus">FTF0335</name>
</gene>
<name>RL14_FRAT1</name>
<dbReference type="EMBL" id="AM286280">
    <property type="protein sequence ID" value="CAL08351.1"/>
    <property type="molecule type" value="Genomic_DNA"/>
</dbReference>
<dbReference type="RefSeq" id="WP_003014346.1">
    <property type="nucleotide sequence ID" value="NC_008245.1"/>
</dbReference>
<dbReference type="SMR" id="Q14JB0"/>
<dbReference type="GeneID" id="75264251"/>
<dbReference type="KEGG" id="ftf:FTF0335"/>
<dbReference type="HOGENOM" id="CLU_095071_2_1_6"/>
<dbReference type="GO" id="GO:0022625">
    <property type="term" value="C:cytosolic large ribosomal subunit"/>
    <property type="evidence" value="ECO:0007669"/>
    <property type="project" value="TreeGrafter"/>
</dbReference>
<dbReference type="GO" id="GO:0070180">
    <property type="term" value="F:large ribosomal subunit rRNA binding"/>
    <property type="evidence" value="ECO:0007669"/>
    <property type="project" value="TreeGrafter"/>
</dbReference>
<dbReference type="GO" id="GO:0003735">
    <property type="term" value="F:structural constituent of ribosome"/>
    <property type="evidence" value="ECO:0007669"/>
    <property type="project" value="InterPro"/>
</dbReference>
<dbReference type="GO" id="GO:0006412">
    <property type="term" value="P:translation"/>
    <property type="evidence" value="ECO:0007669"/>
    <property type="project" value="UniProtKB-UniRule"/>
</dbReference>
<dbReference type="CDD" id="cd00337">
    <property type="entry name" value="Ribosomal_uL14"/>
    <property type="match status" value="1"/>
</dbReference>
<dbReference type="FunFam" id="2.40.150.20:FF:000001">
    <property type="entry name" value="50S ribosomal protein L14"/>
    <property type="match status" value="1"/>
</dbReference>
<dbReference type="Gene3D" id="2.40.150.20">
    <property type="entry name" value="Ribosomal protein L14"/>
    <property type="match status" value="1"/>
</dbReference>
<dbReference type="HAMAP" id="MF_01367">
    <property type="entry name" value="Ribosomal_uL14"/>
    <property type="match status" value="1"/>
</dbReference>
<dbReference type="InterPro" id="IPR000218">
    <property type="entry name" value="Ribosomal_uL14"/>
</dbReference>
<dbReference type="InterPro" id="IPR005745">
    <property type="entry name" value="Ribosomal_uL14_bac-type"/>
</dbReference>
<dbReference type="InterPro" id="IPR019972">
    <property type="entry name" value="Ribosomal_uL14_CS"/>
</dbReference>
<dbReference type="InterPro" id="IPR036853">
    <property type="entry name" value="Ribosomal_uL14_sf"/>
</dbReference>
<dbReference type="NCBIfam" id="TIGR01067">
    <property type="entry name" value="rplN_bact"/>
    <property type="match status" value="1"/>
</dbReference>
<dbReference type="PANTHER" id="PTHR11761">
    <property type="entry name" value="50S/60S RIBOSOMAL PROTEIN L14/L23"/>
    <property type="match status" value="1"/>
</dbReference>
<dbReference type="PANTHER" id="PTHR11761:SF3">
    <property type="entry name" value="LARGE RIBOSOMAL SUBUNIT PROTEIN UL14M"/>
    <property type="match status" value="1"/>
</dbReference>
<dbReference type="Pfam" id="PF00238">
    <property type="entry name" value="Ribosomal_L14"/>
    <property type="match status" value="1"/>
</dbReference>
<dbReference type="SMART" id="SM01374">
    <property type="entry name" value="Ribosomal_L14"/>
    <property type="match status" value="1"/>
</dbReference>
<dbReference type="SUPFAM" id="SSF50193">
    <property type="entry name" value="Ribosomal protein L14"/>
    <property type="match status" value="1"/>
</dbReference>
<dbReference type="PROSITE" id="PS00049">
    <property type="entry name" value="RIBOSOMAL_L14"/>
    <property type="match status" value="1"/>
</dbReference>
<sequence length="122" mass="13235">MIQMQTELQVADNSGAKRVECIKVLGGSHRRYASIGDVIKVTVKEASPRGKAKKGSVYNAVVVRTAKGVRRKDGSKVRFDGNAAVLLNANGQPIGTRIFGPVTRELRTEKFMKIVSLAPEVL</sequence>
<evidence type="ECO:0000255" key="1">
    <source>
        <dbReference type="HAMAP-Rule" id="MF_01367"/>
    </source>
</evidence>
<evidence type="ECO:0000305" key="2"/>
<keyword id="KW-0687">Ribonucleoprotein</keyword>
<keyword id="KW-0689">Ribosomal protein</keyword>
<keyword id="KW-0694">RNA-binding</keyword>
<keyword id="KW-0699">rRNA-binding</keyword>